<proteinExistence type="inferred from homology"/>
<keyword id="KW-0067">ATP-binding</keyword>
<keyword id="KW-0460">Magnesium</keyword>
<keyword id="KW-0479">Metal-binding</keyword>
<keyword id="KW-0547">Nucleotide-binding</keyword>
<keyword id="KW-0548">Nucleotidyltransferase</keyword>
<keyword id="KW-1185">Reference proteome</keyword>
<keyword id="KW-0692">RNA repair</keyword>
<keyword id="KW-0694">RNA-binding</keyword>
<keyword id="KW-0808">Transferase</keyword>
<keyword id="KW-0819">tRNA processing</keyword>
<gene>
    <name evidence="1" type="primary">cca</name>
    <name type="ordered locus">OB1765</name>
</gene>
<protein>
    <recommendedName>
        <fullName evidence="1">CCA-adding enzyme</fullName>
        <ecNumber evidence="1">2.7.7.72</ecNumber>
    </recommendedName>
    <alternativeName>
        <fullName evidence="1">CCA tRNA nucleotidyltransferase</fullName>
    </alternativeName>
    <alternativeName>
        <fullName evidence="1">tRNA CCA-pyrophosphorylase</fullName>
    </alternativeName>
    <alternativeName>
        <fullName evidence="1">tRNA adenylyl-/cytidylyl- transferase</fullName>
    </alternativeName>
    <alternativeName>
        <fullName evidence="1">tRNA nucleotidyltransferase</fullName>
    </alternativeName>
    <alternativeName>
        <fullName evidence="1">tRNA-NT</fullName>
    </alternativeName>
</protein>
<evidence type="ECO:0000255" key="1">
    <source>
        <dbReference type="HAMAP-Rule" id="MF_01263"/>
    </source>
</evidence>
<feature type="chain" id="PRO_0000139044" description="CCA-adding enzyme">
    <location>
        <begin position="1"/>
        <end position="400"/>
    </location>
</feature>
<feature type="binding site" evidence="1">
    <location>
        <position position="28"/>
    </location>
    <ligand>
        <name>ATP</name>
        <dbReference type="ChEBI" id="CHEBI:30616"/>
    </ligand>
</feature>
<feature type="binding site" evidence="1">
    <location>
        <position position="28"/>
    </location>
    <ligand>
        <name>CTP</name>
        <dbReference type="ChEBI" id="CHEBI:37563"/>
    </ligand>
</feature>
<feature type="binding site" evidence="1">
    <location>
        <position position="31"/>
    </location>
    <ligand>
        <name>ATP</name>
        <dbReference type="ChEBI" id="CHEBI:30616"/>
    </ligand>
</feature>
<feature type="binding site" evidence="1">
    <location>
        <position position="31"/>
    </location>
    <ligand>
        <name>CTP</name>
        <dbReference type="ChEBI" id="CHEBI:37563"/>
    </ligand>
</feature>
<feature type="binding site" evidence="1">
    <location>
        <position position="41"/>
    </location>
    <ligand>
        <name>Mg(2+)</name>
        <dbReference type="ChEBI" id="CHEBI:18420"/>
    </ligand>
</feature>
<feature type="binding site" evidence="1">
    <location>
        <position position="43"/>
    </location>
    <ligand>
        <name>Mg(2+)</name>
        <dbReference type="ChEBI" id="CHEBI:18420"/>
    </ligand>
</feature>
<feature type="binding site" evidence="1">
    <location>
        <position position="112"/>
    </location>
    <ligand>
        <name>ATP</name>
        <dbReference type="ChEBI" id="CHEBI:30616"/>
    </ligand>
</feature>
<feature type="binding site" evidence="1">
    <location>
        <position position="112"/>
    </location>
    <ligand>
        <name>CTP</name>
        <dbReference type="ChEBI" id="CHEBI:37563"/>
    </ligand>
</feature>
<feature type="binding site" evidence="1">
    <location>
        <position position="155"/>
    </location>
    <ligand>
        <name>ATP</name>
        <dbReference type="ChEBI" id="CHEBI:30616"/>
    </ligand>
</feature>
<feature type="binding site" evidence="1">
    <location>
        <position position="155"/>
    </location>
    <ligand>
        <name>CTP</name>
        <dbReference type="ChEBI" id="CHEBI:37563"/>
    </ligand>
</feature>
<feature type="binding site" evidence="1">
    <location>
        <position position="158"/>
    </location>
    <ligand>
        <name>ATP</name>
        <dbReference type="ChEBI" id="CHEBI:30616"/>
    </ligand>
</feature>
<feature type="binding site" evidence="1">
    <location>
        <position position="158"/>
    </location>
    <ligand>
        <name>CTP</name>
        <dbReference type="ChEBI" id="CHEBI:37563"/>
    </ligand>
</feature>
<feature type="binding site" evidence="1">
    <location>
        <position position="161"/>
    </location>
    <ligand>
        <name>ATP</name>
        <dbReference type="ChEBI" id="CHEBI:30616"/>
    </ligand>
</feature>
<feature type="binding site" evidence="1">
    <location>
        <position position="161"/>
    </location>
    <ligand>
        <name>CTP</name>
        <dbReference type="ChEBI" id="CHEBI:37563"/>
    </ligand>
</feature>
<feature type="binding site" evidence="1">
    <location>
        <position position="164"/>
    </location>
    <ligand>
        <name>ATP</name>
        <dbReference type="ChEBI" id="CHEBI:30616"/>
    </ligand>
</feature>
<feature type="binding site" evidence="1">
    <location>
        <position position="164"/>
    </location>
    <ligand>
        <name>CTP</name>
        <dbReference type="ChEBI" id="CHEBI:37563"/>
    </ligand>
</feature>
<name>CCA_OCEIH</name>
<dbReference type="EC" id="2.7.7.72" evidence="1"/>
<dbReference type="EMBL" id="BA000028">
    <property type="protein sequence ID" value="BAC13721.1"/>
    <property type="molecule type" value="Genomic_DNA"/>
</dbReference>
<dbReference type="RefSeq" id="WP_011066164.1">
    <property type="nucleotide sequence ID" value="NC_004193.1"/>
</dbReference>
<dbReference type="SMR" id="Q8EQD6"/>
<dbReference type="STRING" id="221109.gene:10734005"/>
<dbReference type="KEGG" id="oih:OB1765"/>
<dbReference type="eggNOG" id="COG0617">
    <property type="taxonomic scope" value="Bacteria"/>
</dbReference>
<dbReference type="HOGENOM" id="CLU_015961_3_0_9"/>
<dbReference type="OrthoDB" id="9805698at2"/>
<dbReference type="PhylomeDB" id="Q8EQD6"/>
<dbReference type="Proteomes" id="UP000000822">
    <property type="component" value="Chromosome"/>
</dbReference>
<dbReference type="GO" id="GO:0005524">
    <property type="term" value="F:ATP binding"/>
    <property type="evidence" value="ECO:0007669"/>
    <property type="project" value="UniProtKB-UniRule"/>
</dbReference>
<dbReference type="GO" id="GO:0004810">
    <property type="term" value="F:CCA tRNA nucleotidyltransferase activity"/>
    <property type="evidence" value="ECO:0007669"/>
    <property type="project" value="UniProtKB-UniRule"/>
</dbReference>
<dbReference type="GO" id="GO:0000287">
    <property type="term" value="F:magnesium ion binding"/>
    <property type="evidence" value="ECO:0007669"/>
    <property type="project" value="UniProtKB-UniRule"/>
</dbReference>
<dbReference type="GO" id="GO:0000049">
    <property type="term" value="F:tRNA binding"/>
    <property type="evidence" value="ECO:0007669"/>
    <property type="project" value="UniProtKB-UniRule"/>
</dbReference>
<dbReference type="GO" id="GO:0042245">
    <property type="term" value="P:RNA repair"/>
    <property type="evidence" value="ECO:0007669"/>
    <property type="project" value="UniProtKB-KW"/>
</dbReference>
<dbReference type="GO" id="GO:0001680">
    <property type="term" value="P:tRNA 3'-terminal CCA addition"/>
    <property type="evidence" value="ECO:0007669"/>
    <property type="project" value="UniProtKB-UniRule"/>
</dbReference>
<dbReference type="CDD" id="cd05398">
    <property type="entry name" value="NT_ClassII-CCAase"/>
    <property type="match status" value="1"/>
</dbReference>
<dbReference type="Gene3D" id="1.10.246.80">
    <property type="match status" value="1"/>
</dbReference>
<dbReference type="Gene3D" id="3.30.460.10">
    <property type="entry name" value="Beta Polymerase, domain 2"/>
    <property type="match status" value="1"/>
</dbReference>
<dbReference type="Gene3D" id="1.10.3090.10">
    <property type="entry name" value="cca-adding enzyme, domain 2"/>
    <property type="match status" value="1"/>
</dbReference>
<dbReference type="HAMAP" id="MF_01263">
    <property type="entry name" value="CCA_bact_type3"/>
    <property type="match status" value="1"/>
</dbReference>
<dbReference type="InterPro" id="IPR050264">
    <property type="entry name" value="Bact_CCA-adding_enz_type3_sf"/>
</dbReference>
<dbReference type="InterPro" id="IPR032810">
    <property type="entry name" value="CCA-adding_enz_C"/>
</dbReference>
<dbReference type="InterPro" id="IPR023068">
    <property type="entry name" value="CCA-adding_enz_firmicutes"/>
</dbReference>
<dbReference type="InterPro" id="IPR043519">
    <property type="entry name" value="NT_sf"/>
</dbReference>
<dbReference type="InterPro" id="IPR002646">
    <property type="entry name" value="PolA_pol_head_dom"/>
</dbReference>
<dbReference type="InterPro" id="IPR032828">
    <property type="entry name" value="PolyA_RNA-bd"/>
</dbReference>
<dbReference type="NCBIfam" id="NF009814">
    <property type="entry name" value="PRK13299.1"/>
    <property type="match status" value="1"/>
</dbReference>
<dbReference type="PANTHER" id="PTHR46173">
    <property type="entry name" value="CCA TRNA NUCLEOTIDYLTRANSFERASE 1, MITOCHONDRIAL"/>
    <property type="match status" value="1"/>
</dbReference>
<dbReference type="PANTHER" id="PTHR46173:SF1">
    <property type="entry name" value="CCA TRNA NUCLEOTIDYLTRANSFERASE 1, MITOCHONDRIAL"/>
    <property type="match status" value="1"/>
</dbReference>
<dbReference type="Pfam" id="PF01743">
    <property type="entry name" value="PolyA_pol"/>
    <property type="match status" value="1"/>
</dbReference>
<dbReference type="Pfam" id="PF12627">
    <property type="entry name" value="PolyA_pol_RNAbd"/>
    <property type="match status" value="1"/>
</dbReference>
<dbReference type="Pfam" id="PF13735">
    <property type="entry name" value="tRNA_NucTran2_2"/>
    <property type="match status" value="1"/>
</dbReference>
<dbReference type="SUPFAM" id="SSF81301">
    <property type="entry name" value="Nucleotidyltransferase"/>
    <property type="match status" value="1"/>
</dbReference>
<dbReference type="SUPFAM" id="SSF81891">
    <property type="entry name" value="Poly A polymerase C-terminal region-like"/>
    <property type="match status" value="1"/>
</dbReference>
<organism>
    <name type="scientific">Oceanobacillus iheyensis (strain DSM 14371 / CIP 107618 / JCM 11309 / KCTC 3954 / HTE831)</name>
    <dbReference type="NCBI Taxonomy" id="221109"/>
    <lineage>
        <taxon>Bacteria</taxon>
        <taxon>Bacillati</taxon>
        <taxon>Bacillota</taxon>
        <taxon>Bacilli</taxon>
        <taxon>Bacillales</taxon>
        <taxon>Bacillaceae</taxon>
        <taxon>Oceanobacillus</taxon>
    </lineage>
</organism>
<comment type="function">
    <text evidence="1">Catalyzes the addition and repair of the essential 3'-terminal CCA sequence in tRNAs without using a nucleic acid template. Adds these three nucleotides in the order of C, C, and A to the tRNA nucleotide-73, using CTP and ATP as substrates and producing inorganic pyrophosphate. tRNA 3'-terminal CCA addition is required both for tRNA processing and repair. Also involved in tRNA surveillance by mediating tandem CCA addition to generate a CCACCA at the 3' terminus of unstable tRNAs. While stable tRNAs receive only 3'-terminal CCA, unstable tRNAs are marked with CCACCA and rapidly degraded.</text>
</comment>
<comment type="catalytic activity">
    <reaction evidence="1">
        <text>a tRNA precursor + 2 CTP + ATP = a tRNA with a 3' CCA end + 3 diphosphate</text>
        <dbReference type="Rhea" id="RHEA:14433"/>
        <dbReference type="Rhea" id="RHEA-COMP:10465"/>
        <dbReference type="Rhea" id="RHEA-COMP:10468"/>
        <dbReference type="ChEBI" id="CHEBI:30616"/>
        <dbReference type="ChEBI" id="CHEBI:33019"/>
        <dbReference type="ChEBI" id="CHEBI:37563"/>
        <dbReference type="ChEBI" id="CHEBI:74896"/>
        <dbReference type="ChEBI" id="CHEBI:83071"/>
        <dbReference type="EC" id="2.7.7.72"/>
    </reaction>
</comment>
<comment type="catalytic activity">
    <reaction evidence="1">
        <text>a tRNA with a 3' CCA end + 2 CTP + ATP = a tRNA with a 3' CCACCA end + 3 diphosphate</text>
        <dbReference type="Rhea" id="RHEA:76235"/>
        <dbReference type="Rhea" id="RHEA-COMP:10468"/>
        <dbReference type="Rhea" id="RHEA-COMP:18655"/>
        <dbReference type="ChEBI" id="CHEBI:30616"/>
        <dbReference type="ChEBI" id="CHEBI:33019"/>
        <dbReference type="ChEBI" id="CHEBI:37563"/>
        <dbReference type="ChEBI" id="CHEBI:83071"/>
        <dbReference type="ChEBI" id="CHEBI:195187"/>
    </reaction>
    <physiologicalReaction direction="left-to-right" evidence="1">
        <dbReference type="Rhea" id="RHEA:76236"/>
    </physiologicalReaction>
</comment>
<comment type="cofactor">
    <cofactor evidence="1">
        <name>Mg(2+)</name>
        <dbReference type="ChEBI" id="CHEBI:18420"/>
    </cofactor>
</comment>
<comment type="subunit">
    <text evidence="1">Homodimer.</text>
</comment>
<comment type="miscellaneous">
    <text evidence="1">A single active site specifically recognizes both ATP and CTP and is responsible for their addition.</text>
</comment>
<comment type="similarity">
    <text evidence="1">Belongs to the tRNA nucleotidyltransferase/poly(A) polymerase family. Bacterial CCA-adding enzyme type 3 subfamily.</text>
</comment>
<accession>Q8EQD6</accession>
<sequence>MISEPFLKASPILTTLISNGYEGYFVGGCVRDLLLQKDIHDIDIATSATPNEVMHLFKKVIPVGIEHGTVIVRHGGESYEVTTYRQDGEYTDHRRPNDVRFVTNLAEDLRRRDFTINALAMDTSGQITDLFHGQDDLKKKLIRTVGNAEERFTEDALRILRAVRFSSQLGCTIQEDTLEAMFVIRKQIQHLAVERITIELTKLFQGQHVSKAIQYIIDLQLDEQLPIFQSGKSDIFKAMKENITPLHSFSEVIAVFHLLDPTIKIHDWIKNYKCSNHVKNDTIQLINAYHYYQSHGINNWLLYILPTKLWDGFIRLIYVIDRTTIERKQLEEITATLPIDKRSQLHLDGNDLMNWFPHRPKGKWIKILLEEVEYLVVSKQLPNEKKIIKEWVLCNQPDPN</sequence>
<reference key="1">
    <citation type="journal article" date="2002" name="Nucleic Acids Res.">
        <title>Genome sequence of Oceanobacillus iheyensis isolated from the Iheya Ridge and its unexpected adaptive capabilities to extreme environments.</title>
        <authorList>
            <person name="Takami H."/>
            <person name="Takaki Y."/>
            <person name="Uchiyama I."/>
        </authorList>
    </citation>
    <scope>NUCLEOTIDE SEQUENCE [LARGE SCALE GENOMIC DNA]</scope>
    <source>
        <strain>DSM 14371 / CIP 107618 / JCM 11309 / KCTC 3954 / HTE831</strain>
    </source>
</reference>